<protein>
    <recommendedName>
        <fullName evidence="1">Protein RnfH</fullName>
    </recommendedName>
</protein>
<comment type="similarity">
    <text evidence="1">Belongs to the UPF0125 (RnfH) family.</text>
</comment>
<proteinExistence type="inferred from homology"/>
<evidence type="ECO:0000255" key="1">
    <source>
        <dbReference type="HAMAP-Rule" id="MF_00460"/>
    </source>
</evidence>
<feature type="chain" id="PRO_1000060336" description="Protein RnfH">
    <location>
        <begin position="1"/>
        <end position="94"/>
    </location>
</feature>
<gene>
    <name evidence="1" type="primary">rnfH</name>
    <name type="ordered locus">Spro_3688</name>
</gene>
<organism>
    <name type="scientific">Serratia proteamaculans (strain 568)</name>
    <dbReference type="NCBI Taxonomy" id="399741"/>
    <lineage>
        <taxon>Bacteria</taxon>
        <taxon>Pseudomonadati</taxon>
        <taxon>Pseudomonadota</taxon>
        <taxon>Gammaproteobacteria</taxon>
        <taxon>Enterobacterales</taxon>
        <taxon>Yersiniaceae</taxon>
        <taxon>Serratia</taxon>
    </lineage>
</organism>
<accession>A8GI44</accession>
<sequence>MSEIRVEVVYALPERQYLRNVTLAEGSSVEQAIVASGLLELRGDIDLQSNKVGIYSRPAKLADVLSDGDRVEIYRPLIADPKELRRQRAEKAKK</sequence>
<reference key="1">
    <citation type="submission" date="2007-09" db="EMBL/GenBank/DDBJ databases">
        <title>Complete sequence of chromosome of Serratia proteamaculans 568.</title>
        <authorList>
            <consortium name="US DOE Joint Genome Institute"/>
            <person name="Copeland A."/>
            <person name="Lucas S."/>
            <person name="Lapidus A."/>
            <person name="Barry K."/>
            <person name="Glavina del Rio T."/>
            <person name="Dalin E."/>
            <person name="Tice H."/>
            <person name="Pitluck S."/>
            <person name="Chain P."/>
            <person name="Malfatti S."/>
            <person name="Shin M."/>
            <person name="Vergez L."/>
            <person name="Schmutz J."/>
            <person name="Larimer F."/>
            <person name="Land M."/>
            <person name="Hauser L."/>
            <person name="Kyrpides N."/>
            <person name="Kim E."/>
            <person name="Taghavi S."/>
            <person name="Newman L."/>
            <person name="Vangronsveld J."/>
            <person name="van der Lelie D."/>
            <person name="Richardson P."/>
        </authorList>
    </citation>
    <scope>NUCLEOTIDE SEQUENCE [LARGE SCALE GENOMIC DNA]</scope>
    <source>
        <strain>568</strain>
    </source>
</reference>
<dbReference type="EMBL" id="CP000826">
    <property type="protein sequence ID" value="ABV42784.1"/>
    <property type="molecule type" value="Genomic_DNA"/>
</dbReference>
<dbReference type="SMR" id="A8GI44"/>
<dbReference type="STRING" id="399741.Spro_3688"/>
<dbReference type="KEGG" id="spe:Spro_3688"/>
<dbReference type="eggNOG" id="COG2914">
    <property type="taxonomic scope" value="Bacteria"/>
</dbReference>
<dbReference type="HOGENOM" id="CLU_150721_1_0_6"/>
<dbReference type="OrthoDB" id="9796575at2"/>
<dbReference type="Gene3D" id="3.10.20.280">
    <property type="entry name" value="RnfH-like"/>
    <property type="match status" value="1"/>
</dbReference>
<dbReference type="HAMAP" id="MF_00460">
    <property type="entry name" value="UPF0125_RnfH"/>
    <property type="match status" value="1"/>
</dbReference>
<dbReference type="InterPro" id="IPR016155">
    <property type="entry name" value="Mopterin_synth/thiamin_S_b"/>
</dbReference>
<dbReference type="InterPro" id="IPR005346">
    <property type="entry name" value="RnfH"/>
</dbReference>
<dbReference type="InterPro" id="IPR037021">
    <property type="entry name" value="RnfH_sf"/>
</dbReference>
<dbReference type="NCBIfam" id="NF002490">
    <property type="entry name" value="PRK01777.1"/>
    <property type="match status" value="1"/>
</dbReference>
<dbReference type="PANTHER" id="PTHR37483">
    <property type="entry name" value="UPF0125 PROTEIN RATB"/>
    <property type="match status" value="1"/>
</dbReference>
<dbReference type="PANTHER" id="PTHR37483:SF1">
    <property type="entry name" value="UPF0125 PROTEIN RATB"/>
    <property type="match status" value="1"/>
</dbReference>
<dbReference type="Pfam" id="PF03658">
    <property type="entry name" value="Ub-RnfH"/>
    <property type="match status" value="1"/>
</dbReference>
<dbReference type="SUPFAM" id="SSF54285">
    <property type="entry name" value="MoaD/ThiS"/>
    <property type="match status" value="1"/>
</dbReference>
<name>RNFH_SERP5</name>